<protein>
    <recommendedName>
        <fullName evidence="1">Translation initiation factor IF-1</fullName>
    </recommendedName>
</protein>
<sequence>MAKEESIEIEGVILEALPNAQFKVELENGLVVLAHVSGKIRMHYIRILPGDKVKVQISPYDISKGRITYRYK</sequence>
<comment type="function">
    <text evidence="1">One of the essential components for the initiation of protein synthesis. Stabilizes the binding of IF-2 and IF-3 on the 30S subunit to which N-formylmethionyl-tRNA(fMet) subsequently binds. Helps modulate mRNA selection, yielding the 30S pre-initiation complex (PIC). Upon addition of the 50S ribosomal subunit IF-1, IF-2 and IF-3 are released leaving the mature 70S translation initiation complex.</text>
</comment>
<comment type="subunit">
    <text evidence="1">Component of the 30S ribosomal translation pre-initiation complex which assembles on the 30S ribosome in the order IF-2 and IF-3, IF-1 and N-formylmethionyl-tRNA(fMet); mRNA recruitment can occur at any time during PIC assembly.</text>
</comment>
<comment type="subcellular location">
    <subcellularLocation>
        <location evidence="1">Cytoplasm</location>
    </subcellularLocation>
</comment>
<comment type="similarity">
    <text evidence="1">Belongs to the IF-1 family.</text>
</comment>
<proteinExistence type="inferred from homology"/>
<gene>
    <name evidence="1" type="primary">infA</name>
    <name type="ordered locus">Cvib_0268</name>
</gene>
<reference key="1">
    <citation type="submission" date="2007-03" db="EMBL/GenBank/DDBJ databases">
        <title>Complete sequence of Prosthecochloris vibrioformis DSM 265.</title>
        <authorList>
            <consortium name="US DOE Joint Genome Institute"/>
            <person name="Copeland A."/>
            <person name="Lucas S."/>
            <person name="Lapidus A."/>
            <person name="Barry K."/>
            <person name="Detter J.C."/>
            <person name="Glavina del Rio T."/>
            <person name="Hammon N."/>
            <person name="Israni S."/>
            <person name="Pitluck S."/>
            <person name="Schmutz J."/>
            <person name="Larimer F."/>
            <person name="Land M."/>
            <person name="Hauser L."/>
            <person name="Mikhailova N."/>
            <person name="Li T."/>
            <person name="Overmann J."/>
            <person name="Schuster S.C."/>
            <person name="Bryant D.A."/>
            <person name="Richardson P."/>
        </authorList>
    </citation>
    <scope>NUCLEOTIDE SEQUENCE [LARGE SCALE GENOMIC DNA]</scope>
    <source>
        <strain>DSM 265 / 1930</strain>
    </source>
</reference>
<name>IF1_CHLPM</name>
<dbReference type="EMBL" id="CP000607">
    <property type="protein sequence ID" value="ABP36290.1"/>
    <property type="molecule type" value="Genomic_DNA"/>
</dbReference>
<dbReference type="SMR" id="A4SCT1"/>
<dbReference type="STRING" id="290318.Cvib_0268"/>
<dbReference type="KEGG" id="pvi:Cvib_0268"/>
<dbReference type="eggNOG" id="COG0361">
    <property type="taxonomic scope" value="Bacteria"/>
</dbReference>
<dbReference type="HOGENOM" id="CLU_151267_1_0_10"/>
<dbReference type="OrthoDB" id="9803250at2"/>
<dbReference type="GO" id="GO:0005829">
    <property type="term" value="C:cytosol"/>
    <property type="evidence" value="ECO:0007669"/>
    <property type="project" value="TreeGrafter"/>
</dbReference>
<dbReference type="GO" id="GO:0043022">
    <property type="term" value="F:ribosome binding"/>
    <property type="evidence" value="ECO:0007669"/>
    <property type="project" value="UniProtKB-UniRule"/>
</dbReference>
<dbReference type="GO" id="GO:0019843">
    <property type="term" value="F:rRNA binding"/>
    <property type="evidence" value="ECO:0007669"/>
    <property type="project" value="UniProtKB-UniRule"/>
</dbReference>
<dbReference type="GO" id="GO:0003743">
    <property type="term" value="F:translation initiation factor activity"/>
    <property type="evidence" value="ECO:0007669"/>
    <property type="project" value="UniProtKB-UniRule"/>
</dbReference>
<dbReference type="CDD" id="cd04451">
    <property type="entry name" value="S1_IF1"/>
    <property type="match status" value="1"/>
</dbReference>
<dbReference type="FunFam" id="2.40.50.140:FF:000002">
    <property type="entry name" value="Translation initiation factor IF-1"/>
    <property type="match status" value="1"/>
</dbReference>
<dbReference type="Gene3D" id="2.40.50.140">
    <property type="entry name" value="Nucleic acid-binding proteins"/>
    <property type="match status" value="1"/>
</dbReference>
<dbReference type="HAMAP" id="MF_00075">
    <property type="entry name" value="IF_1"/>
    <property type="match status" value="1"/>
</dbReference>
<dbReference type="InterPro" id="IPR012340">
    <property type="entry name" value="NA-bd_OB-fold"/>
</dbReference>
<dbReference type="InterPro" id="IPR006196">
    <property type="entry name" value="RNA-binding_domain_S1_IF1"/>
</dbReference>
<dbReference type="InterPro" id="IPR003029">
    <property type="entry name" value="S1_domain"/>
</dbReference>
<dbReference type="InterPro" id="IPR004368">
    <property type="entry name" value="TIF_IF1"/>
</dbReference>
<dbReference type="NCBIfam" id="TIGR00008">
    <property type="entry name" value="infA"/>
    <property type="match status" value="1"/>
</dbReference>
<dbReference type="PANTHER" id="PTHR33370">
    <property type="entry name" value="TRANSLATION INITIATION FACTOR IF-1, CHLOROPLASTIC"/>
    <property type="match status" value="1"/>
</dbReference>
<dbReference type="PANTHER" id="PTHR33370:SF1">
    <property type="entry name" value="TRANSLATION INITIATION FACTOR IF-1, CHLOROPLASTIC"/>
    <property type="match status" value="1"/>
</dbReference>
<dbReference type="Pfam" id="PF01176">
    <property type="entry name" value="eIF-1a"/>
    <property type="match status" value="1"/>
</dbReference>
<dbReference type="SMART" id="SM00316">
    <property type="entry name" value="S1"/>
    <property type="match status" value="1"/>
</dbReference>
<dbReference type="SUPFAM" id="SSF50249">
    <property type="entry name" value="Nucleic acid-binding proteins"/>
    <property type="match status" value="1"/>
</dbReference>
<dbReference type="PROSITE" id="PS50832">
    <property type="entry name" value="S1_IF1_TYPE"/>
    <property type="match status" value="1"/>
</dbReference>
<feature type="chain" id="PRO_0000338886" description="Translation initiation factor IF-1">
    <location>
        <begin position="1"/>
        <end position="72"/>
    </location>
</feature>
<feature type="domain" description="S1-like" evidence="1">
    <location>
        <begin position="1"/>
        <end position="72"/>
    </location>
</feature>
<evidence type="ECO:0000255" key="1">
    <source>
        <dbReference type="HAMAP-Rule" id="MF_00075"/>
    </source>
</evidence>
<accession>A4SCT1</accession>
<organism>
    <name type="scientific">Chlorobium phaeovibrioides (strain DSM 265 / 1930)</name>
    <name type="common">Prosthecochloris vibrioformis (strain DSM 265)</name>
    <dbReference type="NCBI Taxonomy" id="290318"/>
    <lineage>
        <taxon>Bacteria</taxon>
        <taxon>Pseudomonadati</taxon>
        <taxon>Chlorobiota</taxon>
        <taxon>Chlorobiia</taxon>
        <taxon>Chlorobiales</taxon>
        <taxon>Chlorobiaceae</taxon>
        <taxon>Chlorobium/Pelodictyon group</taxon>
        <taxon>Chlorobium</taxon>
    </lineage>
</organism>
<keyword id="KW-0963">Cytoplasm</keyword>
<keyword id="KW-0396">Initiation factor</keyword>
<keyword id="KW-0648">Protein biosynthesis</keyword>
<keyword id="KW-0694">RNA-binding</keyword>
<keyword id="KW-0699">rRNA-binding</keyword>